<organism>
    <name type="scientific">Salmo salar</name>
    <name type="common">Atlantic salmon</name>
    <dbReference type="NCBI Taxonomy" id="8030"/>
    <lineage>
        <taxon>Eukaryota</taxon>
        <taxon>Metazoa</taxon>
        <taxon>Chordata</taxon>
        <taxon>Craniata</taxon>
        <taxon>Vertebrata</taxon>
        <taxon>Euteleostomi</taxon>
        <taxon>Actinopterygii</taxon>
        <taxon>Neopterygii</taxon>
        <taxon>Teleostei</taxon>
        <taxon>Protacanthopterygii</taxon>
        <taxon>Salmoniformes</taxon>
        <taxon>Salmonidae</taxon>
        <taxon>Salmoninae</taxon>
        <taxon>Salmo</taxon>
    </lineage>
</organism>
<reference key="1">
    <citation type="journal article" date="2010" name="BMC Genomics">
        <title>Salmo salar and Esox lucius full-length cDNA sequences reveal changes in evolutionary pressures on a post-tetraploidization genome.</title>
        <authorList>
            <person name="Leong J.S."/>
            <person name="Jantzen S.G."/>
            <person name="von Schalburg K.R."/>
            <person name="Cooper G.A."/>
            <person name="Messmer A.M."/>
            <person name="Liao N.Y."/>
            <person name="Munro S."/>
            <person name="Moore R."/>
            <person name="Holt R.A."/>
            <person name="Jones S.J."/>
            <person name="Davidson W.S."/>
            <person name="Koop B.F."/>
        </authorList>
    </citation>
    <scope>NUCLEOTIDE SEQUENCE [LARGE SCALE MRNA]</scope>
    <source>
        <tissue>Brain</tissue>
    </source>
</reference>
<accession>B5X3C4</accession>
<protein>
    <recommendedName>
        <fullName evidence="2">Lissencephaly-1 homolog B</fullName>
    </recommendedName>
</protein>
<feature type="initiator methionine" description="Removed" evidence="2">
    <location>
        <position position="1"/>
    </location>
</feature>
<feature type="chain" id="PRO_0000405036" description="Lissencephaly-1 homolog B">
    <location>
        <begin position="2"/>
        <end position="410"/>
    </location>
</feature>
<feature type="domain" description="LisH" evidence="2">
    <location>
        <begin position="7"/>
        <end position="39"/>
    </location>
</feature>
<feature type="repeat" description="WD 1">
    <location>
        <begin position="106"/>
        <end position="147"/>
    </location>
</feature>
<feature type="repeat" description="WD 2">
    <location>
        <begin position="148"/>
        <end position="187"/>
    </location>
</feature>
<feature type="repeat" description="WD 3">
    <location>
        <begin position="190"/>
        <end position="229"/>
    </location>
</feature>
<feature type="repeat" description="WD 4">
    <location>
        <begin position="232"/>
        <end position="271"/>
    </location>
</feature>
<feature type="repeat" description="WD 5">
    <location>
        <begin position="274"/>
        <end position="333"/>
    </location>
</feature>
<feature type="repeat" description="WD 6">
    <location>
        <begin position="336"/>
        <end position="375"/>
    </location>
</feature>
<feature type="repeat" description="WD 7">
    <location>
        <begin position="378"/>
        <end position="410"/>
    </location>
</feature>
<feature type="coiled-coil region" evidence="2">
    <location>
        <begin position="56"/>
        <end position="82"/>
    </location>
</feature>
<evidence type="ECO:0000250" key="1">
    <source>
        <dbReference type="UniProtKB" id="P43033"/>
    </source>
</evidence>
<evidence type="ECO:0000255" key="2">
    <source>
        <dbReference type="HAMAP-Rule" id="MF_03141"/>
    </source>
</evidence>
<proteinExistence type="evidence at transcript level"/>
<name>LIS1B_SALSA</name>
<keyword id="KW-0131">Cell cycle</keyword>
<keyword id="KW-0132">Cell division</keyword>
<keyword id="KW-0175">Coiled coil</keyword>
<keyword id="KW-0963">Cytoplasm</keyword>
<keyword id="KW-0206">Cytoskeleton</keyword>
<keyword id="KW-0217">Developmental protein</keyword>
<keyword id="KW-0221">Differentiation</keyword>
<keyword id="KW-0493">Microtubule</keyword>
<keyword id="KW-0498">Mitosis</keyword>
<keyword id="KW-0524">Neurogenesis</keyword>
<keyword id="KW-1185">Reference proteome</keyword>
<keyword id="KW-0677">Repeat</keyword>
<keyword id="KW-0813">Transport</keyword>
<keyword id="KW-0853">WD repeat</keyword>
<comment type="function">
    <text evidence="1 2">Regulatory subunit (beta subunit) of the cytosolic type I platelet-activating factor (PAF) acetylhydrolase (PAF-AH (I)), an enzyme that catalyzes the hydrolyze of the acetyl group at the sn-2 position of PAF and its analogs and participates in PAF inactivation. Regulates the PAF-AH (I) activity in a catalytic dimer composition-dependent manner (By similarity). Positively regulates the activity of the minus-end directed microtubule motor protein dynein. May enhance dynein-mediated microtubule sliding by targeting dynein to the microtubule plus end. Required for several dynein- and microtubule-dependent processes such as the maintenance of Golgi integrity, the peripheral transport of microtubule fragments and the coupling of the nucleus and centrosome. May be required for proliferation of neuronal precursors and neuronal migration.</text>
</comment>
<comment type="subunit">
    <text evidence="1 2">Can self-associate. Component of the cytosolic PAF-AH (I) heterotetrameric enzyme, which is composed of PAFAH1B1 (beta), PAFAH1B2 (alpha2) and PAFAH1B3 (alpha1) subunits. The catalytic activity of the enzyme resides in the alpha1 (PAFAH1B3) and alpha2 (PAFAH1B2) subunits, whereas the beta subunit (PAFAH1B1) has regulatory activity. Trimer formation is not essential for the catalytic activity (By similarity). Interacts with dynein, dynactin, nde1 and ndel1.</text>
</comment>
<comment type="subcellular location">
    <subcellularLocation>
        <location evidence="2">Cytoplasm</location>
        <location evidence="2">Cytoskeleton</location>
    </subcellularLocation>
    <subcellularLocation>
        <location evidence="2">Cytoplasm</location>
        <location evidence="2">Cytoskeleton</location>
        <location evidence="2">Microtubule organizing center</location>
        <location evidence="2">Centrosome</location>
    </subcellularLocation>
    <text evidence="2">Localizes to the plus end of microtubules and to the centrosome.</text>
</comment>
<comment type="domain">
    <text evidence="2">Dimerization mediated by the LisH domain may be required to activate dynein.</text>
</comment>
<comment type="similarity">
    <text evidence="2">Belongs to the WD repeat LIS1/nudF family.</text>
</comment>
<dbReference type="EMBL" id="BT045543">
    <property type="protein sequence ID" value="ACI33805.1"/>
    <property type="molecule type" value="mRNA"/>
</dbReference>
<dbReference type="RefSeq" id="NP_001133735.1">
    <property type="nucleotide sequence ID" value="NM_001140263.1"/>
</dbReference>
<dbReference type="RefSeq" id="XP_014051149.1">
    <property type="nucleotide sequence ID" value="XM_014195674.1"/>
</dbReference>
<dbReference type="RefSeq" id="XP_014051150.1">
    <property type="nucleotide sequence ID" value="XM_014195675.1"/>
</dbReference>
<dbReference type="RefSeq" id="XP_014051151.1">
    <property type="nucleotide sequence ID" value="XM_014195676.1"/>
</dbReference>
<dbReference type="SMR" id="B5X3C4"/>
<dbReference type="STRING" id="8030.ENSSSAP00000033198"/>
<dbReference type="PaxDb" id="8030-ENSSSAP00000033198"/>
<dbReference type="Ensembl" id="ENSSSAT00020085220">
    <property type="protein sequence ID" value="ENSSSAP00020059242"/>
    <property type="gene ID" value="ENSSSAG00020042196"/>
</dbReference>
<dbReference type="Ensembl" id="ENSSSAT00070040875">
    <property type="protein sequence ID" value="ENSSSAP00070039076"/>
    <property type="gene ID" value="ENSSSAG00070025569"/>
</dbReference>
<dbReference type="Ensembl" id="ENSSSAT00075028651">
    <property type="protein sequence ID" value="ENSSSAP00075019837"/>
    <property type="gene ID" value="ENSSSAG00075013927"/>
</dbReference>
<dbReference type="GeneID" id="100195234"/>
<dbReference type="KEGG" id="sasa:100195234"/>
<dbReference type="CTD" id="100195234"/>
<dbReference type="Proteomes" id="UP000087266">
    <property type="component" value="Chromosome ssa04"/>
</dbReference>
<dbReference type="Bgee" id="ENSSSAG00000041175">
    <property type="expression patterns" value="Expressed in pituitary gland and 25 other cell types or tissues"/>
</dbReference>
<dbReference type="GO" id="GO:0008247">
    <property type="term" value="C:1-alkyl-2-acetylglycerophosphocholine esterase complex"/>
    <property type="evidence" value="ECO:0000250"/>
    <property type="project" value="UniProtKB"/>
</dbReference>
<dbReference type="GO" id="GO:0005813">
    <property type="term" value="C:centrosome"/>
    <property type="evidence" value="ECO:0007669"/>
    <property type="project" value="UniProtKB-SubCell"/>
</dbReference>
<dbReference type="GO" id="GO:0005737">
    <property type="term" value="C:cytoplasm"/>
    <property type="evidence" value="ECO:0007669"/>
    <property type="project" value="UniProtKB-UniRule"/>
</dbReference>
<dbReference type="GO" id="GO:0005874">
    <property type="term" value="C:microtubule"/>
    <property type="evidence" value="ECO:0007669"/>
    <property type="project" value="UniProtKB-KW"/>
</dbReference>
<dbReference type="GO" id="GO:0005875">
    <property type="term" value="C:microtubule associated complex"/>
    <property type="evidence" value="ECO:0007669"/>
    <property type="project" value="UniProtKB-UniRule"/>
</dbReference>
<dbReference type="GO" id="GO:0070840">
    <property type="term" value="F:dynein complex binding"/>
    <property type="evidence" value="ECO:0007669"/>
    <property type="project" value="UniProtKB-UniRule"/>
</dbReference>
<dbReference type="GO" id="GO:0046982">
    <property type="term" value="F:protein heterodimerization activity"/>
    <property type="evidence" value="ECO:0000250"/>
    <property type="project" value="UniProtKB"/>
</dbReference>
<dbReference type="GO" id="GO:0030154">
    <property type="term" value="P:cell differentiation"/>
    <property type="evidence" value="ECO:0007669"/>
    <property type="project" value="UniProtKB-KW"/>
</dbReference>
<dbReference type="GO" id="GO:0051301">
    <property type="term" value="P:cell division"/>
    <property type="evidence" value="ECO:0007669"/>
    <property type="project" value="UniProtKB-KW"/>
</dbReference>
<dbReference type="GO" id="GO:0000132">
    <property type="term" value="P:establishment of mitotic spindle orientation"/>
    <property type="evidence" value="ECO:0007669"/>
    <property type="project" value="UniProtKB-UniRule"/>
</dbReference>
<dbReference type="GO" id="GO:0051012">
    <property type="term" value="P:microtubule sliding"/>
    <property type="evidence" value="ECO:0007669"/>
    <property type="project" value="UniProtKB-UniRule"/>
</dbReference>
<dbReference type="GO" id="GO:0007399">
    <property type="term" value="P:nervous system development"/>
    <property type="evidence" value="ECO:0007669"/>
    <property type="project" value="UniProtKB-UniRule"/>
</dbReference>
<dbReference type="GO" id="GO:0038026">
    <property type="term" value="P:reelin-mediated signaling pathway"/>
    <property type="evidence" value="ECO:0000250"/>
    <property type="project" value="UniProtKB"/>
</dbReference>
<dbReference type="CDD" id="cd00200">
    <property type="entry name" value="WD40"/>
    <property type="match status" value="1"/>
</dbReference>
<dbReference type="FunFam" id="2.130.10.10:FF:000038">
    <property type="entry name" value="Lissencephaly-1 homolog B"/>
    <property type="match status" value="1"/>
</dbReference>
<dbReference type="FunFam" id="1.20.960.30:FF:000002">
    <property type="entry name" value="Platelet-activating factor acetylhydrolase ib"/>
    <property type="match status" value="1"/>
</dbReference>
<dbReference type="Gene3D" id="1.20.960.30">
    <property type="match status" value="1"/>
</dbReference>
<dbReference type="Gene3D" id="2.130.10.10">
    <property type="entry name" value="YVTN repeat-like/Quinoprotein amine dehydrogenase"/>
    <property type="match status" value="1"/>
</dbReference>
<dbReference type="HAMAP" id="MF_03141">
    <property type="entry name" value="lis1"/>
    <property type="match status" value="1"/>
</dbReference>
<dbReference type="InterPro" id="IPR017252">
    <property type="entry name" value="Dynein_regulator_LIS1"/>
</dbReference>
<dbReference type="InterPro" id="IPR020472">
    <property type="entry name" value="G-protein_beta_WD-40_rep"/>
</dbReference>
<dbReference type="InterPro" id="IPR037190">
    <property type="entry name" value="LIS1_N"/>
</dbReference>
<dbReference type="InterPro" id="IPR006594">
    <property type="entry name" value="LisH"/>
</dbReference>
<dbReference type="InterPro" id="IPR056795">
    <property type="entry name" value="PAC1-like_LisH-like_dom"/>
</dbReference>
<dbReference type="InterPro" id="IPR015943">
    <property type="entry name" value="WD40/YVTN_repeat-like_dom_sf"/>
</dbReference>
<dbReference type="InterPro" id="IPR019775">
    <property type="entry name" value="WD40_repeat_CS"/>
</dbReference>
<dbReference type="InterPro" id="IPR036322">
    <property type="entry name" value="WD40_repeat_dom_sf"/>
</dbReference>
<dbReference type="InterPro" id="IPR001680">
    <property type="entry name" value="WD40_rpt"/>
</dbReference>
<dbReference type="InterPro" id="IPR050349">
    <property type="entry name" value="WD_LIS1/nudF_dynein_reg"/>
</dbReference>
<dbReference type="PANTHER" id="PTHR44129">
    <property type="entry name" value="WD REPEAT-CONTAINING PROTEIN POP1"/>
    <property type="match status" value="1"/>
</dbReference>
<dbReference type="Pfam" id="PF24951">
    <property type="entry name" value="LisH_PAC1"/>
    <property type="match status" value="1"/>
</dbReference>
<dbReference type="Pfam" id="PF00400">
    <property type="entry name" value="WD40"/>
    <property type="match status" value="7"/>
</dbReference>
<dbReference type="PIRSF" id="PIRSF037647">
    <property type="entry name" value="Dynein_regulator_Lis1"/>
    <property type="match status" value="1"/>
</dbReference>
<dbReference type="PRINTS" id="PR00320">
    <property type="entry name" value="GPROTEINBRPT"/>
</dbReference>
<dbReference type="SMART" id="SM00667">
    <property type="entry name" value="LisH"/>
    <property type="match status" value="1"/>
</dbReference>
<dbReference type="SMART" id="SM00320">
    <property type="entry name" value="WD40"/>
    <property type="match status" value="7"/>
</dbReference>
<dbReference type="SUPFAM" id="SSF109925">
    <property type="entry name" value="Lissencephaly-1 protein (Lis-1, PAF-AH alpha) N-terminal domain"/>
    <property type="match status" value="1"/>
</dbReference>
<dbReference type="SUPFAM" id="SSF50978">
    <property type="entry name" value="WD40 repeat-like"/>
    <property type="match status" value="1"/>
</dbReference>
<dbReference type="PROSITE" id="PS50896">
    <property type="entry name" value="LISH"/>
    <property type="match status" value="1"/>
</dbReference>
<dbReference type="PROSITE" id="PS00678">
    <property type="entry name" value="WD_REPEATS_1"/>
    <property type="match status" value="4"/>
</dbReference>
<dbReference type="PROSITE" id="PS50082">
    <property type="entry name" value="WD_REPEATS_2"/>
    <property type="match status" value="7"/>
</dbReference>
<dbReference type="PROSITE" id="PS50294">
    <property type="entry name" value="WD_REPEATS_REGION"/>
    <property type="match status" value="1"/>
</dbReference>
<sequence length="410" mass="46616">MVLSQRQRDELNRAIADYLRSNGYEEAYSTFKKEAELDMNEELDKKYAGLLEKKWTSVIRLQKKVMELESKLNEAKEEITLGGPVAQKRDPKEWIPRPPERYALSGHRSPVTRVIFHPVFSVMVTSSEDATIKVWDYEAGDFERTLKGHTDSVQDISFDQTGKLLASCSADMTIKLWDFQGFECIRTMHGHDHNVSSVAIMPNGDHIVSASRDKTIKMWEVATGYCVKTFTGHREWVRMVRPNQDGSLIASCSNDQTVRVWVATSKECKAELREHEHVVECIAWAPDTAHPTILEATSSESKKNGKSGPFLLSGSRDKTIKMWDISTGMCLMTLVGHDNWVRGVLVHPGGRFIVSCADDKTLRIWDYKNKRCMKTLCAHEHFVTSLDMHQTAPYVVTGSVDQTVKVWECR</sequence>
<gene>
    <name type="primary">pafah1b1-2</name>
    <name evidence="2" type="synonym">lis1-2</name>
</gene>